<protein>
    <recommendedName>
        <fullName evidence="1">Lon protease</fullName>
        <ecNumber evidence="1">3.4.21.53</ecNumber>
    </recommendedName>
    <alternativeName>
        <fullName evidence="1">ATP-dependent protease La</fullName>
    </alternativeName>
</protein>
<reference key="1">
    <citation type="journal article" date="2002" name="Proc. Natl. Acad. Sci. U.S.A.">
        <title>Extensive mosaic structure revealed by the complete genome sequence of uropathogenic Escherichia coli.</title>
        <authorList>
            <person name="Welch R.A."/>
            <person name="Burland V."/>
            <person name="Plunkett G. III"/>
            <person name="Redford P."/>
            <person name="Roesch P."/>
            <person name="Rasko D."/>
            <person name="Buckles E.L."/>
            <person name="Liou S.-R."/>
            <person name="Boutin A."/>
            <person name="Hackett J."/>
            <person name="Stroud D."/>
            <person name="Mayhew G.F."/>
            <person name="Rose D.J."/>
            <person name="Zhou S."/>
            <person name="Schwartz D.C."/>
            <person name="Perna N.T."/>
            <person name="Mobley H.L.T."/>
            <person name="Donnenberg M.S."/>
            <person name="Blattner F.R."/>
        </authorList>
    </citation>
    <scope>NUCLEOTIDE SEQUENCE [LARGE SCALE GENOMIC DNA]</scope>
    <source>
        <strain>CFT073 / ATCC 700928 / UPEC</strain>
    </source>
</reference>
<feature type="chain" id="PRO_0000076134" description="Lon protease">
    <location>
        <begin position="1"/>
        <end position="784"/>
    </location>
</feature>
<feature type="domain" description="Lon N-terminal" evidence="3">
    <location>
        <begin position="11"/>
        <end position="204"/>
    </location>
</feature>
<feature type="domain" description="Lon proteolytic" evidence="2">
    <location>
        <begin position="592"/>
        <end position="773"/>
    </location>
</feature>
<feature type="active site" evidence="1">
    <location>
        <position position="679"/>
    </location>
</feature>
<feature type="active site" evidence="1">
    <location>
        <position position="722"/>
    </location>
</feature>
<feature type="binding site" evidence="1">
    <location>
        <begin position="356"/>
        <end position="363"/>
    </location>
    <ligand>
        <name>ATP</name>
        <dbReference type="ChEBI" id="CHEBI:30616"/>
    </ligand>
</feature>
<proteinExistence type="inferred from homology"/>
<comment type="function">
    <text evidence="1">ATP-dependent serine protease that mediates the selective degradation of mutant and abnormal proteins as well as certain short-lived regulatory proteins. Required for cellular homeostasis and for survival from DNA damage and developmental changes induced by stress. Degrades polypeptides processively to yield small peptide fragments that are 5 to 10 amino acids long. Binds to DNA in a double-stranded, site-specific manner. Endogenous substrates include the regulatory proteins RcsA and SulA, the transcriptional activator SoxS, and UmuD. Its overproduction specifically inhibits translation through at least two different pathways, one of them being the YoeB-YefM toxin-antitoxin system.</text>
</comment>
<comment type="catalytic activity">
    <reaction evidence="1">
        <text>Hydrolysis of proteins in presence of ATP.</text>
        <dbReference type="EC" id="3.4.21.53"/>
    </reaction>
</comment>
<comment type="activity regulation">
    <text evidence="1">Contains an allosteric site (distinct from its active site), whose occupancy by an unfolded polypeptide leads to enzyme activation.</text>
</comment>
<comment type="subunit">
    <text evidence="1">Homohexamer. Organized in a ring with a central cavity. ATP binding and hydrolysis do not affect the oligomeric state of the enzyme.</text>
</comment>
<comment type="subcellular location">
    <subcellularLocation>
        <location evidence="1">Cytoplasm</location>
    </subcellularLocation>
</comment>
<comment type="induction">
    <text evidence="1">By accumulation of abnormal proteins, such as at high temperatures. Under stress conditions.</text>
</comment>
<comment type="similarity">
    <text evidence="1">Belongs to the peptidase S16 family.</text>
</comment>
<comment type="sequence caution" evidence="4">
    <conflict type="erroneous initiation">
        <sequence resource="EMBL-CDS" id="AAN79033"/>
    </conflict>
    <text>Extended N-terminus.</text>
</comment>
<sequence length="784" mass="87438">MNPERSERIEIPVLPLRDVVVYPHMVIPLFVGREKSIRCLEAAMDHDKKIMLVAQKEASTDEPGVNDLFTVGTVASILQMLKLPDGTVKVLVEGLQRARISALSDNGEHFSAKAEYLESPTIDEREQEVLVRTAISQFEGYIKLNKKIPPEVLTSLNSIDDPARLADTIAAHMPLKLADKQSVLEMSDVNERLEYLMAMMESEIDLLQVEKRIRNRVKKQMEKSQREYYLNEQMKAIQKELGEMDDAPDENEALKRKIDAAKMPKEAKEKAEAELQKLKMMSPMSAEATVVRGYIDWMVQVPWNARSKVKKDLRQAQEILDTDHYGLERVKDRILEYLAVQSRVNKIKGPILCLVGPPGVGKTSLGQSIAKATGRKYVRMALGGVRDEAEIRGHRRTYIGSMPGKLIQKMAKVGVKNPLFLLDEIDKMSSDMRGDPASALLEVLDPEQNVAFSDHYLEVDYDLSDVMFVATSNSMNIPAPLLDRMEVIRLSGYTEDEKLNIAKRHLLPKQIERNALKKGELTVDDSAIIGIIRYYTREAGVRGLEREISKLCRKAVKQLLLDKSLKHIEINGDNLHDYLGVQRFDYGRADNENRVGQVTGLAWTEVGGDLLTIETACVPGKGKLTYTGSLGEVMQESIQAALTVVRARAEKLGINPDFYEKRDIHVHVPEGATPKDGPSAGIAMCTALVSCLTGNPVRADVAMTGEITLRGQVLPIGGLKEKLLAAHRGGIKTVLIPFENKRDLEEIPDNVIADLDIHPVKRIEEVLTLALQNEPSGMQVVTAK</sequence>
<evidence type="ECO:0000255" key="1">
    <source>
        <dbReference type="HAMAP-Rule" id="MF_01973"/>
    </source>
</evidence>
<evidence type="ECO:0000255" key="2">
    <source>
        <dbReference type="PROSITE-ProRule" id="PRU01122"/>
    </source>
</evidence>
<evidence type="ECO:0000255" key="3">
    <source>
        <dbReference type="PROSITE-ProRule" id="PRU01123"/>
    </source>
</evidence>
<evidence type="ECO:0000305" key="4"/>
<keyword id="KW-0067">ATP-binding</keyword>
<keyword id="KW-0963">Cytoplasm</keyword>
<keyword id="KW-0378">Hydrolase</keyword>
<keyword id="KW-0547">Nucleotide-binding</keyword>
<keyword id="KW-0645">Protease</keyword>
<keyword id="KW-1185">Reference proteome</keyword>
<keyword id="KW-0720">Serine protease</keyword>
<keyword id="KW-0346">Stress response</keyword>
<name>LON_ECOL6</name>
<gene>
    <name evidence="1" type="primary">lon</name>
    <name type="ordered locus">c0555</name>
</gene>
<accession>P0A9M1</accession>
<accession>P08177</accession>
<accession>P78219</accession>
<dbReference type="EC" id="3.4.21.53" evidence="1"/>
<dbReference type="EMBL" id="AE014075">
    <property type="protein sequence ID" value="AAN79033.1"/>
    <property type="status" value="ALT_INIT"/>
    <property type="molecule type" value="Genomic_DNA"/>
</dbReference>
<dbReference type="RefSeq" id="WP_001295325.1">
    <property type="nucleotide sequence ID" value="NZ_CP051263.1"/>
</dbReference>
<dbReference type="BMRB" id="P0A9M1"/>
<dbReference type="SMR" id="P0A9M1"/>
<dbReference type="STRING" id="199310.c0555"/>
<dbReference type="MEROPS" id="S16.001"/>
<dbReference type="GeneID" id="93777015"/>
<dbReference type="KEGG" id="ecc:c0555"/>
<dbReference type="eggNOG" id="COG0466">
    <property type="taxonomic scope" value="Bacteria"/>
</dbReference>
<dbReference type="HOGENOM" id="CLU_004109_4_3_6"/>
<dbReference type="Proteomes" id="UP000001410">
    <property type="component" value="Chromosome"/>
</dbReference>
<dbReference type="GO" id="GO:0005737">
    <property type="term" value="C:cytoplasm"/>
    <property type="evidence" value="ECO:0007669"/>
    <property type="project" value="UniProtKB-SubCell"/>
</dbReference>
<dbReference type="GO" id="GO:0005524">
    <property type="term" value="F:ATP binding"/>
    <property type="evidence" value="ECO:0007669"/>
    <property type="project" value="UniProtKB-UniRule"/>
</dbReference>
<dbReference type="GO" id="GO:0016887">
    <property type="term" value="F:ATP hydrolysis activity"/>
    <property type="evidence" value="ECO:0007669"/>
    <property type="project" value="UniProtKB-UniRule"/>
</dbReference>
<dbReference type="GO" id="GO:0004176">
    <property type="term" value="F:ATP-dependent peptidase activity"/>
    <property type="evidence" value="ECO:0007669"/>
    <property type="project" value="UniProtKB-UniRule"/>
</dbReference>
<dbReference type="GO" id="GO:0043565">
    <property type="term" value="F:sequence-specific DNA binding"/>
    <property type="evidence" value="ECO:0007669"/>
    <property type="project" value="UniProtKB-UniRule"/>
</dbReference>
<dbReference type="GO" id="GO:0004252">
    <property type="term" value="F:serine-type endopeptidase activity"/>
    <property type="evidence" value="ECO:0007669"/>
    <property type="project" value="UniProtKB-UniRule"/>
</dbReference>
<dbReference type="GO" id="GO:0034605">
    <property type="term" value="P:cellular response to heat"/>
    <property type="evidence" value="ECO:0007669"/>
    <property type="project" value="UniProtKB-UniRule"/>
</dbReference>
<dbReference type="GO" id="GO:0006515">
    <property type="term" value="P:protein quality control for misfolded or incompletely synthesized proteins"/>
    <property type="evidence" value="ECO:0007669"/>
    <property type="project" value="UniProtKB-UniRule"/>
</dbReference>
<dbReference type="CDD" id="cd19500">
    <property type="entry name" value="RecA-like_Lon"/>
    <property type="match status" value="1"/>
</dbReference>
<dbReference type="FunFam" id="1.10.8.60:FF:000035">
    <property type="entry name" value="Lon protease"/>
    <property type="match status" value="1"/>
</dbReference>
<dbReference type="FunFam" id="1.20.58.1480:FF:000001">
    <property type="entry name" value="Lon protease"/>
    <property type="match status" value="1"/>
</dbReference>
<dbReference type="FunFam" id="2.30.130.40:FF:000001">
    <property type="entry name" value="Lon protease"/>
    <property type="match status" value="1"/>
</dbReference>
<dbReference type="FunFam" id="3.30.230.10:FF:000010">
    <property type="entry name" value="Lon protease"/>
    <property type="match status" value="1"/>
</dbReference>
<dbReference type="FunFam" id="1.20.5.5270:FF:000002">
    <property type="entry name" value="Lon protease homolog"/>
    <property type="match status" value="1"/>
</dbReference>
<dbReference type="FunFam" id="3.40.50.300:FF:000021">
    <property type="entry name" value="Lon protease homolog"/>
    <property type="match status" value="1"/>
</dbReference>
<dbReference type="Gene3D" id="1.10.8.60">
    <property type="match status" value="1"/>
</dbReference>
<dbReference type="Gene3D" id="1.20.5.5270">
    <property type="match status" value="1"/>
</dbReference>
<dbReference type="Gene3D" id="1.20.58.1480">
    <property type="match status" value="1"/>
</dbReference>
<dbReference type="Gene3D" id="3.30.230.10">
    <property type="match status" value="1"/>
</dbReference>
<dbReference type="Gene3D" id="2.30.130.40">
    <property type="entry name" value="LON domain-like"/>
    <property type="match status" value="1"/>
</dbReference>
<dbReference type="Gene3D" id="3.40.50.300">
    <property type="entry name" value="P-loop containing nucleotide triphosphate hydrolases"/>
    <property type="match status" value="1"/>
</dbReference>
<dbReference type="HAMAP" id="MF_01973">
    <property type="entry name" value="lon_bact"/>
    <property type="match status" value="1"/>
</dbReference>
<dbReference type="InterPro" id="IPR003593">
    <property type="entry name" value="AAA+_ATPase"/>
</dbReference>
<dbReference type="InterPro" id="IPR003959">
    <property type="entry name" value="ATPase_AAA_core"/>
</dbReference>
<dbReference type="InterPro" id="IPR027543">
    <property type="entry name" value="Lon_bac"/>
</dbReference>
<dbReference type="InterPro" id="IPR004815">
    <property type="entry name" value="Lon_bac/euk-typ"/>
</dbReference>
<dbReference type="InterPro" id="IPR054594">
    <property type="entry name" value="Lon_lid"/>
</dbReference>
<dbReference type="InterPro" id="IPR008269">
    <property type="entry name" value="Lon_proteolytic"/>
</dbReference>
<dbReference type="InterPro" id="IPR027065">
    <property type="entry name" value="Lon_Prtase"/>
</dbReference>
<dbReference type="InterPro" id="IPR003111">
    <property type="entry name" value="Lon_prtase_N"/>
</dbReference>
<dbReference type="InterPro" id="IPR046336">
    <property type="entry name" value="Lon_prtase_N_sf"/>
</dbReference>
<dbReference type="InterPro" id="IPR027417">
    <property type="entry name" value="P-loop_NTPase"/>
</dbReference>
<dbReference type="InterPro" id="IPR008268">
    <property type="entry name" value="Peptidase_S16_AS"/>
</dbReference>
<dbReference type="InterPro" id="IPR015947">
    <property type="entry name" value="PUA-like_sf"/>
</dbReference>
<dbReference type="InterPro" id="IPR020568">
    <property type="entry name" value="Ribosomal_Su5_D2-typ_SF"/>
</dbReference>
<dbReference type="InterPro" id="IPR014721">
    <property type="entry name" value="Ribsml_uS5_D2-typ_fold_subgr"/>
</dbReference>
<dbReference type="NCBIfam" id="TIGR00763">
    <property type="entry name" value="lon"/>
    <property type="match status" value="1"/>
</dbReference>
<dbReference type="NCBIfam" id="NF008053">
    <property type="entry name" value="PRK10787.1"/>
    <property type="match status" value="1"/>
</dbReference>
<dbReference type="PANTHER" id="PTHR10046">
    <property type="entry name" value="ATP DEPENDENT LON PROTEASE FAMILY MEMBER"/>
    <property type="match status" value="1"/>
</dbReference>
<dbReference type="Pfam" id="PF00004">
    <property type="entry name" value="AAA"/>
    <property type="match status" value="1"/>
</dbReference>
<dbReference type="Pfam" id="PF05362">
    <property type="entry name" value="Lon_C"/>
    <property type="match status" value="1"/>
</dbReference>
<dbReference type="Pfam" id="PF22667">
    <property type="entry name" value="Lon_lid"/>
    <property type="match status" value="1"/>
</dbReference>
<dbReference type="Pfam" id="PF02190">
    <property type="entry name" value="LON_substr_bdg"/>
    <property type="match status" value="1"/>
</dbReference>
<dbReference type="PIRSF" id="PIRSF001174">
    <property type="entry name" value="Lon_proteas"/>
    <property type="match status" value="1"/>
</dbReference>
<dbReference type="PRINTS" id="PR00830">
    <property type="entry name" value="ENDOLAPTASE"/>
</dbReference>
<dbReference type="SMART" id="SM00382">
    <property type="entry name" value="AAA"/>
    <property type="match status" value="1"/>
</dbReference>
<dbReference type="SMART" id="SM00464">
    <property type="entry name" value="LON"/>
    <property type="match status" value="1"/>
</dbReference>
<dbReference type="SUPFAM" id="SSF52540">
    <property type="entry name" value="P-loop containing nucleoside triphosphate hydrolases"/>
    <property type="match status" value="1"/>
</dbReference>
<dbReference type="SUPFAM" id="SSF88697">
    <property type="entry name" value="PUA domain-like"/>
    <property type="match status" value="1"/>
</dbReference>
<dbReference type="SUPFAM" id="SSF54211">
    <property type="entry name" value="Ribosomal protein S5 domain 2-like"/>
    <property type="match status" value="1"/>
</dbReference>
<dbReference type="PROSITE" id="PS51787">
    <property type="entry name" value="LON_N"/>
    <property type="match status" value="1"/>
</dbReference>
<dbReference type="PROSITE" id="PS51786">
    <property type="entry name" value="LON_PROTEOLYTIC"/>
    <property type="match status" value="1"/>
</dbReference>
<dbReference type="PROSITE" id="PS01046">
    <property type="entry name" value="LON_SER"/>
    <property type="match status" value="1"/>
</dbReference>
<organism>
    <name type="scientific">Escherichia coli O6:H1 (strain CFT073 / ATCC 700928 / UPEC)</name>
    <dbReference type="NCBI Taxonomy" id="199310"/>
    <lineage>
        <taxon>Bacteria</taxon>
        <taxon>Pseudomonadati</taxon>
        <taxon>Pseudomonadota</taxon>
        <taxon>Gammaproteobacteria</taxon>
        <taxon>Enterobacterales</taxon>
        <taxon>Enterobacteriaceae</taxon>
        <taxon>Escherichia</taxon>
    </lineage>
</organism>